<comment type="function">
    <text evidence="1">Involved in mRNA degradation. Catalyzes the phosphorolysis of single-stranded polyribonucleotides processively in the 3'- to 5'-direction.</text>
</comment>
<comment type="catalytic activity">
    <reaction evidence="1">
        <text>RNA(n+1) + phosphate = RNA(n) + a ribonucleoside 5'-diphosphate</text>
        <dbReference type="Rhea" id="RHEA:22096"/>
        <dbReference type="Rhea" id="RHEA-COMP:14527"/>
        <dbReference type="Rhea" id="RHEA-COMP:17342"/>
        <dbReference type="ChEBI" id="CHEBI:43474"/>
        <dbReference type="ChEBI" id="CHEBI:57930"/>
        <dbReference type="ChEBI" id="CHEBI:140395"/>
        <dbReference type="EC" id="2.7.7.8"/>
    </reaction>
</comment>
<comment type="cofactor">
    <cofactor evidence="1">
        <name>Mg(2+)</name>
        <dbReference type="ChEBI" id="CHEBI:18420"/>
    </cofactor>
</comment>
<comment type="subunit">
    <text evidence="2">Homotrimer.</text>
</comment>
<comment type="subcellular location">
    <subcellularLocation>
        <location evidence="1">Cytoplasm</location>
    </subcellularLocation>
</comment>
<comment type="similarity">
    <text evidence="1">Belongs to the polyribonucleotide nucleotidyltransferase family.</text>
</comment>
<name>PNP_STRAT</name>
<proteinExistence type="evidence at protein level"/>
<keyword id="KW-0002">3D-structure</keyword>
<keyword id="KW-0963">Cytoplasm</keyword>
<keyword id="KW-0460">Magnesium</keyword>
<keyword id="KW-0479">Metal-binding</keyword>
<keyword id="KW-0548">Nucleotidyltransferase</keyword>
<keyword id="KW-0694">RNA-binding</keyword>
<keyword id="KW-0808">Transferase</keyword>
<dbReference type="EC" id="2.7.7.8" evidence="1"/>
<dbReference type="EMBL" id="U19858">
    <property type="protein sequence ID" value="AAB17498.1"/>
    <property type="molecule type" value="Genomic_DNA"/>
</dbReference>
<dbReference type="PDB" id="1E3H">
    <property type="method" value="X-ray"/>
    <property type="resolution" value="2.60 A"/>
    <property type="chains" value="A=1-740"/>
</dbReference>
<dbReference type="PDB" id="1E3P">
    <property type="method" value="X-ray"/>
    <property type="resolution" value="2.50 A"/>
    <property type="chains" value="A=1-740"/>
</dbReference>
<dbReference type="PDBsum" id="1E3H"/>
<dbReference type="PDBsum" id="1E3P"/>
<dbReference type="SMR" id="Q53597"/>
<dbReference type="STRING" id="1890.AFM16_28085"/>
<dbReference type="BRENDA" id="2.7.6.5">
    <property type="organism ID" value="5974"/>
</dbReference>
<dbReference type="BRENDA" id="2.7.7.8">
    <property type="organism ID" value="5974"/>
</dbReference>
<dbReference type="EvolutionaryTrace" id="Q53597"/>
<dbReference type="GO" id="GO:0005829">
    <property type="term" value="C:cytosol"/>
    <property type="evidence" value="ECO:0007669"/>
    <property type="project" value="TreeGrafter"/>
</dbReference>
<dbReference type="GO" id="GO:0000175">
    <property type="term" value="F:3'-5'-RNA exonuclease activity"/>
    <property type="evidence" value="ECO:0007669"/>
    <property type="project" value="TreeGrafter"/>
</dbReference>
<dbReference type="GO" id="GO:0000287">
    <property type="term" value="F:magnesium ion binding"/>
    <property type="evidence" value="ECO:0007669"/>
    <property type="project" value="UniProtKB-UniRule"/>
</dbReference>
<dbReference type="GO" id="GO:0004654">
    <property type="term" value="F:polyribonucleotide nucleotidyltransferase activity"/>
    <property type="evidence" value="ECO:0007669"/>
    <property type="project" value="UniProtKB-UniRule"/>
</dbReference>
<dbReference type="GO" id="GO:0003723">
    <property type="term" value="F:RNA binding"/>
    <property type="evidence" value="ECO:0007669"/>
    <property type="project" value="UniProtKB-UniRule"/>
</dbReference>
<dbReference type="GO" id="GO:0006402">
    <property type="term" value="P:mRNA catabolic process"/>
    <property type="evidence" value="ECO:0007669"/>
    <property type="project" value="UniProtKB-UniRule"/>
</dbReference>
<dbReference type="GO" id="GO:0006396">
    <property type="term" value="P:RNA processing"/>
    <property type="evidence" value="ECO:0007669"/>
    <property type="project" value="InterPro"/>
</dbReference>
<dbReference type="CDD" id="cd02393">
    <property type="entry name" value="KH-I_PNPase"/>
    <property type="match status" value="1"/>
</dbReference>
<dbReference type="CDD" id="cd11364">
    <property type="entry name" value="RNase_PH_PNPase_2"/>
    <property type="match status" value="1"/>
</dbReference>
<dbReference type="CDD" id="cd04472">
    <property type="entry name" value="S1_PNPase"/>
    <property type="match status" value="1"/>
</dbReference>
<dbReference type="FunFam" id="2.40.50.140:FF:000069">
    <property type="entry name" value="Polyribonucleotide nucleotidyltransferase"/>
    <property type="match status" value="1"/>
</dbReference>
<dbReference type="FunFam" id="3.30.1370.10:FF:000001">
    <property type="entry name" value="Polyribonucleotide nucleotidyltransferase"/>
    <property type="match status" value="1"/>
</dbReference>
<dbReference type="FunFam" id="3.30.230.70:FF:000001">
    <property type="entry name" value="Polyribonucleotide nucleotidyltransferase"/>
    <property type="match status" value="1"/>
</dbReference>
<dbReference type="FunFam" id="3.30.230.70:FF:000002">
    <property type="entry name" value="Polyribonucleotide nucleotidyltransferase"/>
    <property type="match status" value="1"/>
</dbReference>
<dbReference type="Gene3D" id="3.30.230.70">
    <property type="entry name" value="GHMP Kinase, N-terminal domain"/>
    <property type="match status" value="2"/>
</dbReference>
<dbReference type="Gene3D" id="3.30.1370.10">
    <property type="entry name" value="K Homology domain, type 1"/>
    <property type="match status" value="1"/>
</dbReference>
<dbReference type="Gene3D" id="2.40.50.140">
    <property type="entry name" value="Nucleic acid-binding proteins"/>
    <property type="match status" value="1"/>
</dbReference>
<dbReference type="HAMAP" id="MF_01595">
    <property type="entry name" value="PNPase"/>
    <property type="match status" value="1"/>
</dbReference>
<dbReference type="InterPro" id="IPR001247">
    <property type="entry name" value="ExoRNase_PH_dom1"/>
</dbReference>
<dbReference type="InterPro" id="IPR036345">
    <property type="entry name" value="ExoRNase_PH_dom2_sf"/>
</dbReference>
<dbReference type="InterPro" id="IPR014069">
    <property type="entry name" value="GPSI/PNP"/>
</dbReference>
<dbReference type="InterPro" id="IPR004087">
    <property type="entry name" value="KH_dom"/>
</dbReference>
<dbReference type="InterPro" id="IPR004088">
    <property type="entry name" value="KH_dom_type_1"/>
</dbReference>
<dbReference type="InterPro" id="IPR036612">
    <property type="entry name" value="KH_dom_type_1_sf"/>
</dbReference>
<dbReference type="InterPro" id="IPR012340">
    <property type="entry name" value="NA-bd_OB-fold"/>
</dbReference>
<dbReference type="InterPro" id="IPR012162">
    <property type="entry name" value="PNPase"/>
</dbReference>
<dbReference type="InterPro" id="IPR027408">
    <property type="entry name" value="PNPase/RNase_PH_dom_sf"/>
</dbReference>
<dbReference type="InterPro" id="IPR015848">
    <property type="entry name" value="PNPase_PH_RNA-bd_bac/org-type"/>
</dbReference>
<dbReference type="InterPro" id="IPR036456">
    <property type="entry name" value="PNPase_PH_RNA-bd_sf"/>
</dbReference>
<dbReference type="InterPro" id="IPR020568">
    <property type="entry name" value="Ribosomal_Su5_D2-typ_SF"/>
</dbReference>
<dbReference type="InterPro" id="IPR003029">
    <property type="entry name" value="S1_domain"/>
</dbReference>
<dbReference type="NCBIfam" id="TIGR03591">
    <property type="entry name" value="polynuc_phos"/>
    <property type="match status" value="1"/>
</dbReference>
<dbReference type="NCBIfam" id="TIGR02696">
    <property type="entry name" value="pppGpp_PNP"/>
    <property type="match status" value="1"/>
</dbReference>
<dbReference type="NCBIfam" id="NF008805">
    <property type="entry name" value="PRK11824.1"/>
    <property type="match status" value="1"/>
</dbReference>
<dbReference type="PANTHER" id="PTHR11252">
    <property type="entry name" value="POLYRIBONUCLEOTIDE NUCLEOTIDYLTRANSFERASE"/>
    <property type="match status" value="1"/>
</dbReference>
<dbReference type="PANTHER" id="PTHR11252:SF0">
    <property type="entry name" value="POLYRIBONUCLEOTIDE NUCLEOTIDYLTRANSFERASE 1, MITOCHONDRIAL"/>
    <property type="match status" value="1"/>
</dbReference>
<dbReference type="Pfam" id="PF00013">
    <property type="entry name" value="KH_1"/>
    <property type="match status" value="1"/>
</dbReference>
<dbReference type="Pfam" id="PF03726">
    <property type="entry name" value="PNPase"/>
    <property type="match status" value="1"/>
</dbReference>
<dbReference type="Pfam" id="PF01138">
    <property type="entry name" value="RNase_PH"/>
    <property type="match status" value="2"/>
</dbReference>
<dbReference type="Pfam" id="PF00575">
    <property type="entry name" value="S1"/>
    <property type="match status" value="1"/>
</dbReference>
<dbReference type="PIRSF" id="PIRSF005499">
    <property type="entry name" value="PNPase"/>
    <property type="match status" value="1"/>
</dbReference>
<dbReference type="SMART" id="SM00322">
    <property type="entry name" value="KH"/>
    <property type="match status" value="1"/>
</dbReference>
<dbReference type="SMART" id="SM00316">
    <property type="entry name" value="S1"/>
    <property type="match status" value="1"/>
</dbReference>
<dbReference type="SUPFAM" id="SSF54791">
    <property type="entry name" value="Eukaryotic type KH-domain (KH-domain type I)"/>
    <property type="match status" value="1"/>
</dbReference>
<dbReference type="SUPFAM" id="SSF46915">
    <property type="entry name" value="Polynucleotide phosphorylase/guanosine pentaphosphate synthase (PNPase/GPSI), domain 3"/>
    <property type="match status" value="1"/>
</dbReference>
<dbReference type="SUPFAM" id="SSF55666">
    <property type="entry name" value="Ribonuclease PH domain 2-like"/>
    <property type="match status" value="2"/>
</dbReference>
<dbReference type="SUPFAM" id="SSF54211">
    <property type="entry name" value="Ribosomal protein S5 domain 2-like"/>
    <property type="match status" value="2"/>
</dbReference>
<dbReference type="PROSITE" id="PS50084">
    <property type="entry name" value="KH_TYPE_1"/>
    <property type="match status" value="1"/>
</dbReference>
<dbReference type="PROSITE" id="PS50126">
    <property type="entry name" value="S1"/>
    <property type="match status" value="1"/>
</dbReference>
<sequence length="740" mass="79160">MENETHYAEAVIDNGAFGTRTIRFETGRLAKQAAGSAVAYLDDDTMVLSATTASKNPKDQLDFFPLTVDVEERMYAAGKIPGSFFRREGRPSEDAILTCRLIDRPLRPSFKKGLRNEIQVVATIMALNPDHLYDVVAINAASASTQLAGLPFSGPYGGVRVALIRGQWVAFPTHTELEDAVFDMVVAGRVLEDGDVAIMMVEAEATEKTVQLVKDGAEAPTEEVVAAGLDAAKPFIKVLCKAQADLAAKAAKPTGEFPVPSSTTRTTSEALSAAVRPELSAALTIAGKQDREAELDRVKALAAEKLLPEFEGREKEISAAYRPWPSSSSAERVIKEKKRIDGRGVTDIRTLAAEVEAIPRVHGSALFERGETQILGVTTLNMLRMEQQLDTLSPVTRKPYMHNYNFPPISVGETGRVGSPKRREIGHGALAERAIVPVLPTREEFPYAIRQVSEALGSNGSTSMGSVCASTMSLLNAGVPLKAPVAGIAMGLISQEINGETHYVALTDILGAEDAFGDMDFKVAGTKEFVTALQLDTKLDGIPASVLAAALKQARDARLHILDVMMEAIDTPDEMSPNAPRIITVKIPVDKIGEVIGPKRQMINQIQEDTGAEITIEDDGTIYIGAADGPAAEAARATINGIANPTSPEVGERILGSVVKTTTFGAFVSLLPGKDGLLHISQIRKLAGGKRVENVEDVLGVGQKVQVEIAEIDSRGKLSLIPVIEGEEAASDEKKDDAEQ</sequence>
<organism>
    <name type="scientific">Streptomyces antibioticus</name>
    <dbReference type="NCBI Taxonomy" id="1890"/>
    <lineage>
        <taxon>Bacteria</taxon>
        <taxon>Bacillati</taxon>
        <taxon>Actinomycetota</taxon>
        <taxon>Actinomycetes</taxon>
        <taxon>Kitasatosporales</taxon>
        <taxon>Streptomycetaceae</taxon>
        <taxon>Streptomyces</taxon>
    </lineage>
</organism>
<feature type="chain" id="PRO_0000329887" description="Polyribonucleotide nucleotidyltransferase">
    <location>
        <begin position="1"/>
        <end position="740"/>
    </location>
</feature>
<feature type="domain" description="KH" evidence="1">
    <location>
        <begin position="580"/>
        <end position="639"/>
    </location>
</feature>
<feature type="domain" description="S1 motif" evidence="1">
    <location>
        <begin position="651"/>
        <end position="723"/>
    </location>
</feature>
<feature type="binding site" evidence="1">
    <location>
        <position position="514"/>
    </location>
    <ligand>
        <name>Mg(2+)</name>
        <dbReference type="ChEBI" id="CHEBI:18420"/>
    </ligand>
</feature>
<feature type="binding site" evidence="1">
    <location>
        <position position="520"/>
    </location>
    <ligand>
        <name>Mg(2+)</name>
        <dbReference type="ChEBI" id="CHEBI:18420"/>
    </ligand>
</feature>
<feature type="strand" evidence="3">
    <location>
        <begin position="6"/>
        <end position="13"/>
    </location>
</feature>
<feature type="helix" evidence="3">
    <location>
        <begin position="15"/>
        <end position="17"/>
    </location>
</feature>
<feature type="strand" evidence="3">
    <location>
        <begin position="19"/>
        <end position="29"/>
    </location>
</feature>
<feature type="strand" evidence="3">
    <location>
        <begin position="33"/>
        <end position="41"/>
    </location>
</feature>
<feature type="turn" evidence="3">
    <location>
        <begin position="42"/>
        <end position="44"/>
    </location>
</feature>
<feature type="strand" evidence="3">
    <location>
        <begin position="45"/>
        <end position="57"/>
    </location>
</feature>
<feature type="strand" evidence="3">
    <location>
        <begin position="66"/>
        <end position="72"/>
    </location>
</feature>
<feature type="helix" evidence="3">
    <location>
        <begin position="74"/>
        <end position="77"/>
    </location>
</feature>
<feature type="helix" evidence="3">
    <location>
        <begin position="93"/>
        <end position="106"/>
    </location>
</feature>
<feature type="helix" evidence="3">
    <location>
        <begin position="107"/>
        <end position="109"/>
    </location>
</feature>
<feature type="strand" evidence="3">
    <location>
        <begin position="116"/>
        <end position="126"/>
    </location>
</feature>
<feature type="helix" evidence="3">
    <location>
        <begin position="134"/>
        <end position="147"/>
    </location>
</feature>
<feature type="strand" evidence="3">
    <location>
        <begin position="150"/>
        <end position="152"/>
    </location>
</feature>
<feature type="strand" evidence="3">
    <location>
        <begin position="157"/>
        <end position="164"/>
    </location>
</feature>
<feature type="strand" evidence="3">
    <location>
        <begin position="167"/>
        <end position="171"/>
    </location>
</feature>
<feature type="helix" evidence="3">
    <location>
        <begin position="174"/>
        <end position="177"/>
    </location>
</feature>
<feature type="strand" evidence="3">
    <location>
        <begin position="180"/>
        <end position="190"/>
    </location>
</feature>
<feature type="strand" evidence="3">
    <location>
        <begin position="196"/>
        <end position="205"/>
    </location>
</feature>
<feature type="helix" evidence="3">
    <location>
        <begin position="209"/>
        <end position="214"/>
    </location>
</feature>
<feature type="helix" evidence="3">
    <location>
        <begin position="222"/>
        <end position="250"/>
    </location>
</feature>
<feature type="helix" evidence="3">
    <location>
        <begin position="265"/>
        <end position="282"/>
    </location>
</feature>
<feature type="helix" evidence="3">
    <location>
        <begin position="288"/>
        <end position="303"/>
    </location>
</feature>
<feature type="turn" evidence="3">
    <location>
        <begin position="307"/>
        <end position="310"/>
    </location>
</feature>
<feature type="helix" evidence="3">
    <location>
        <begin position="314"/>
        <end position="335"/>
    </location>
</feature>
<feature type="strand" evidence="3">
    <location>
        <begin position="351"/>
        <end position="355"/>
    </location>
</feature>
<feature type="strand" evidence="3">
    <location>
        <begin position="358"/>
        <end position="369"/>
    </location>
</feature>
<feature type="strand" evidence="3">
    <location>
        <begin position="372"/>
        <end position="382"/>
    </location>
</feature>
<feature type="helix" evidence="3">
    <location>
        <begin position="383"/>
        <end position="385"/>
    </location>
</feature>
<feature type="strand" evidence="3">
    <location>
        <begin position="386"/>
        <end position="388"/>
    </location>
</feature>
<feature type="strand" evidence="3">
    <location>
        <begin position="391"/>
        <end position="394"/>
    </location>
</feature>
<feature type="strand" evidence="3">
    <location>
        <begin position="397"/>
        <end position="405"/>
    </location>
</feature>
<feature type="helix" evidence="3">
    <location>
        <begin position="408"/>
        <end position="411"/>
    </location>
</feature>
<feature type="helix" evidence="3">
    <location>
        <begin position="422"/>
        <end position="435"/>
    </location>
</feature>
<feature type="helix" evidence="3">
    <location>
        <begin position="436"/>
        <end position="438"/>
    </location>
</feature>
<feature type="turn" evidence="3">
    <location>
        <begin position="442"/>
        <end position="444"/>
    </location>
</feature>
<feature type="strand" evidence="3">
    <location>
        <begin position="447"/>
        <end position="457"/>
    </location>
</feature>
<feature type="helix" evidence="3">
    <location>
        <begin position="462"/>
        <end position="477"/>
    </location>
</feature>
<feature type="strand" evidence="3">
    <location>
        <begin position="486"/>
        <end position="499"/>
    </location>
</feature>
<feature type="strand" evidence="3">
    <location>
        <begin position="501"/>
        <end position="508"/>
    </location>
</feature>
<feature type="helix" evidence="3">
    <location>
        <begin position="511"/>
        <end position="516"/>
    </location>
</feature>
<feature type="strand" evidence="3">
    <location>
        <begin position="518"/>
        <end position="525"/>
    </location>
</feature>
<feature type="strand" evidence="3">
    <location>
        <begin position="527"/>
        <end position="537"/>
    </location>
</feature>
<feature type="helix" evidence="3">
    <location>
        <begin position="544"/>
        <end position="568"/>
    </location>
</feature>
<feature type="helix" evidence="3">
    <location>
        <begin position="607"/>
        <end position="611"/>
    </location>
</feature>
<feature type="strand" evidence="3">
    <location>
        <begin position="626"/>
        <end position="628"/>
    </location>
</feature>
<feature type="helix" evidence="3">
    <location>
        <begin position="629"/>
        <end position="632"/>
    </location>
</feature>
<feature type="strand" evidence="3">
    <location>
        <begin position="657"/>
        <end position="660"/>
    </location>
</feature>
<accession>Q53597</accession>
<protein>
    <recommendedName>
        <fullName evidence="1">Polyribonucleotide nucleotidyltransferase</fullName>
        <ecNumber evidence="1">2.7.7.8</ecNumber>
    </recommendedName>
    <alternativeName>
        <fullName evidence="1">Polynucleotide phosphorylase</fullName>
        <shortName evidence="1">PNPase</shortName>
    </alternativeName>
</protein>
<evidence type="ECO:0000255" key="1">
    <source>
        <dbReference type="HAMAP-Rule" id="MF_01595"/>
    </source>
</evidence>
<evidence type="ECO:0000269" key="2">
    <source>
    </source>
</evidence>
<evidence type="ECO:0007829" key="3">
    <source>
        <dbReference type="PDB" id="1E3P"/>
    </source>
</evidence>
<gene>
    <name evidence="1" type="primary">pnp</name>
</gene>
<reference key="1">
    <citation type="journal article" date="1996" name="J. Bacteriol.">
        <title>Guanosine pentaphosphate synthetase from Streptomyces antibioticus is also a polynucleotide phosphorylase.</title>
        <authorList>
            <person name="Jones G.H."/>
            <person name="Bibb M.J."/>
        </authorList>
    </citation>
    <scope>NUCLEOTIDE SEQUENCE [GENOMIC DNA]</scope>
    <source>
        <strain>DSM 41481 / IMRU 3720</strain>
    </source>
</reference>
<reference key="2">
    <citation type="journal article" date="2000" name="Structure">
        <title>A duplicated fold is the structural basis for polynucleotide phosphorylase catalytic activity, processivity, and regulation.</title>
        <authorList>
            <person name="Symmons M.F."/>
            <person name="Jones G.H."/>
            <person name="Luisi B.F."/>
        </authorList>
    </citation>
    <scope>X-RAY CRYSTALLOGRAPHY (2.5 ANGSTROMS)</scope>
    <scope>SUBUNIT</scope>
</reference>